<organism>
    <name type="scientific">Escherichia coli O127:H6 (strain E2348/69 / EPEC)</name>
    <dbReference type="NCBI Taxonomy" id="574521"/>
    <lineage>
        <taxon>Bacteria</taxon>
        <taxon>Pseudomonadati</taxon>
        <taxon>Pseudomonadota</taxon>
        <taxon>Gammaproteobacteria</taxon>
        <taxon>Enterobacterales</taxon>
        <taxon>Enterobacteriaceae</taxon>
        <taxon>Escherichia</taxon>
    </lineage>
</organism>
<name>PERC_ECO27</name>
<keyword id="KW-0010">Activator</keyword>
<keyword id="KW-0238">DNA-binding</keyword>
<keyword id="KW-0614">Plasmid</keyword>
<keyword id="KW-1185">Reference proteome</keyword>
<keyword id="KW-0804">Transcription</keyword>
<keyword id="KW-0805">Transcription regulation</keyword>
<proteinExistence type="predicted"/>
<geneLocation type="plasmid">
    <name>pMAR2</name>
</geneLocation>
<accession>B7UTE9</accession>
<accession>P43475</accession>
<dbReference type="EMBL" id="Z48561">
    <property type="protein sequence ID" value="CAA88447.1"/>
    <property type="molecule type" value="Genomic_DNA"/>
</dbReference>
<dbReference type="EMBL" id="FM180569">
    <property type="protein sequence ID" value="CAS07458.1"/>
    <property type="molecule type" value="Genomic_DNA"/>
</dbReference>
<dbReference type="PIR" id="I69150">
    <property type="entry name" value="I69150"/>
</dbReference>
<dbReference type="RefSeq" id="WP_000405638.1">
    <property type="nucleotide sequence ID" value="NC_011603.1"/>
</dbReference>
<dbReference type="RefSeq" id="YP_001965399.1">
    <property type="nucleotide sequence ID" value="NC_010862.1"/>
</dbReference>
<dbReference type="SMR" id="B7UTE9"/>
<dbReference type="DNASU" id="7056340"/>
<dbReference type="KEGG" id="ecg:E2348_P1_022"/>
<dbReference type="HOGENOM" id="CLU_167464_2_0_6"/>
<dbReference type="Proteomes" id="UP000008205">
    <property type="component" value="Plasmid pMAR2"/>
</dbReference>
<dbReference type="GO" id="GO:0003677">
    <property type="term" value="F:DNA binding"/>
    <property type="evidence" value="ECO:0007669"/>
    <property type="project" value="UniProtKB-KW"/>
</dbReference>
<dbReference type="InterPro" id="IPR024684">
    <property type="entry name" value="Tscrpt_act_PerC/SfV_Orf40"/>
</dbReference>
<dbReference type="Pfam" id="PF06069">
    <property type="entry name" value="PerC"/>
    <property type="match status" value="1"/>
</dbReference>
<protein>
    <recommendedName>
        <fullName>Protein PerC</fullName>
    </recommendedName>
    <alternativeName>
        <fullName>Protein BfpW</fullName>
    </alternativeName>
</protein>
<reference key="1">
    <citation type="journal article" date="1995" name="Infect. Immun.">
        <title>A plasmid-encoded regulatory region activates chromosomal eaeA expression in enteropathogenic Escherichia coli.</title>
        <authorList>
            <person name="Gomez-Duarte O.G."/>
            <person name="Kaper J.B."/>
        </authorList>
    </citation>
    <scope>NUCLEOTIDE SEQUENCE [GENOMIC DNA]</scope>
</reference>
<reference key="2">
    <citation type="journal article" date="2009" name="J. Bacteriol.">
        <title>Complete genome sequence and comparative genome analysis of enteropathogenic Escherichia coli O127:H6 strain E2348/69.</title>
        <authorList>
            <person name="Iguchi A."/>
            <person name="Thomson N.R."/>
            <person name="Ogura Y."/>
            <person name="Saunders D."/>
            <person name="Ooka T."/>
            <person name="Henderson I.R."/>
            <person name="Harris D."/>
            <person name="Asadulghani M."/>
            <person name="Kurokawa K."/>
            <person name="Dean P."/>
            <person name="Kenny B."/>
            <person name="Quail M.A."/>
            <person name="Thurston S."/>
            <person name="Dougan G."/>
            <person name="Hayashi T."/>
            <person name="Parkhill J."/>
            <person name="Frankel G."/>
        </authorList>
    </citation>
    <scope>NUCLEOTIDE SEQUENCE [LARGE SCALE GENOMIC DNA]</scope>
    <source>
        <strain>E2348/69 / EPEC</strain>
    </source>
</reference>
<gene>
    <name type="primary">perC</name>
    <name type="synonym">bfpW</name>
    <name type="ordered locus">E2348_P1_022</name>
</gene>
<comment type="function">
    <text>Transcriptional activator of eaeA/bfpA expression in enteropathogenic E.coli.</text>
</comment>
<sequence length="89" mass="10585">MEIRDKKAKYLEEKGFYRRAADRWAEIMVLLSSDAERKLAAQKRAFCINKSLRNNLQADNYSDIKQGVYKAYKKMGLVNEKIFRNYKEN</sequence>
<feature type="chain" id="PRO_0000058311" description="Protein PerC">
    <location>
        <begin position="1"/>
        <end position="89"/>
    </location>
</feature>